<reference key="1">
    <citation type="journal article" date="2009" name="Environ. Microbiol.">
        <title>Contribution of mobile genetic elements to Desulfovibrio vulgaris genome plasticity.</title>
        <authorList>
            <person name="Walker C.B."/>
            <person name="Stolyar S."/>
            <person name="Chivian D."/>
            <person name="Pinel N."/>
            <person name="Gabster J.A."/>
            <person name="Dehal P.S."/>
            <person name="He Z."/>
            <person name="Yang Z.K."/>
            <person name="Yen H.C."/>
            <person name="Zhou J."/>
            <person name="Wall J.D."/>
            <person name="Hazen T.C."/>
            <person name="Arkin A.P."/>
            <person name="Stahl D.A."/>
        </authorList>
    </citation>
    <scope>NUCLEOTIDE SEQUENCE [LARGE SCALE GENOMIC DNA]</scope>
    <source>
        <strain>DP4</strain>
    </source>
</reference>
<dbReference type="EMBL" id="CP000527">
    <property type="protein sequence ID" value="ABM28781.1"/>
    <property type="molecule type" value="Genomic_DNA"/>
</dbReference>
<dbReference type="RefSeq" id="WP_010938599.1">
    <property type="nucleotide sequence ID" value="NC_008751.1"/>
</dbReference>
<dbReference type="SMR" id="A1VEB5"/>
<dbReference type="KEGG" id="dvl:Dvul_1764"/>
<dbReference type="HOGENOM" id="CLU_041575_5_2_7"/>
<dbReference type="Proteomes" id="UP000009173">
    <property type="component" value="Chromosome"/>
</dbReference>
<dbReference type="GO" id="GO:1990904">
    <property type="term" value="C:ribonucleoprotein complex"/>
    <property type="evidence" value="ECO:0007669"/>
    <property type="project" value="UniProtKB-KW"/>
</dbReference>
<dbReference type="GO" id="GO:0005840">
    <property type="term" value="C:ribosome"/>
    <property type="evidence" value="ECO:0007669"/>
    <property type="project" value="UniProtKB-KW"/>
</dbReference>
<dbReference type="GO" id="GO:0019843">
    <property type="term" value="F:rRNA binding"/>
    <property type="evidence" value="ECO:0007669"/>
    <property type="project" value="UniProtKB-UniRule"/>
</dbReference>
<dbReference type="GO" id="GO:0003735">
    <property type="term" value="F:structural constituent of ribosome"/>
    <property type="evidence" value="ECO:0007669"/>
    <property type="project" value="InterPro"/>
</dbReference>
<dbReference type="GO" id="GO:0006412">
    <property type="term" value="P:translation"/>
    <property type="evidence" value="ECO:0007669"/>
    <property type="project" value="UniProtKB-UniRule"/>
</dbReference>
<dbReference type="Gene3D" id="3.40.1370.10">
    <property type="match status" value="1"/>
</dbReference>
<dbReference type="HAMAP" id="MF_01328_B">
    <property type="entry name" value="Ribosomal_uL4_B"/>
    <property type="match status" value="1"/>
</dbReference>
<dbReference type="InterPro" id="IPR002136">
    <property type="entry name" value="Ribosomal_uL4"/>
</dbReference>
<dbReference type="InterPro" id="IPR013005">
    <property type="entry name" value="Ribosomal_uL4-like"/>
</dbReference>
<dbReference type="InterPro" id="IPR023574">
    <property type="entry name" value="Ribosomal_uL4_dom_sf"/>
</dbReference>
<dbReference type="NCBIfam" id="TIGR03953">
    <property type="entry name" value="rplD_bact"/>
    <property type="match status" value="1"/>
</dbReference>
<dbReference type="PANTHER" id="PTHR10746">
    <property type="entry name" value="50S RIBOSOMAL PROTEIN L4"/>
    <property type="match status" value="1"/>
</dbReference>
<dbReference type="PANTHER" id="PTHR10746:SF6">
    <property type="entry name" value="LARGE RIBOSOMAL SUBUNIT PROTEIN UL4M"/>
    <property type="match status" value="1"/>
</dbReference>
<dbReference type="Pfam" id="PF00573">
    <property type="entry name" value="Ribosomal_L4"/>
    <property type="match status" value="1"/>
</dbReference>
<dbReference type="SUPFAM" id="SSF52166">
    <property type="entry name" value="Ribosomal protein L4"/>
    <property type="match status" value="1"/>
</dbReference>
<evidence type="ECO:0000255" key="1">
    <source>
        <dbReference type="HAMAP-Rule" id="MF_01328"/>
    </source>
</evidence>
<evidence type="ECO:0000305" key="2"/>
<name>RL4_NITV4</name>
<protein>
    <recommendedName>
        <fullName evidence="1">Large ribosomal subunit protein uL4</fullName>
    </recommendedName>
    <alternativeName>
        <fullName evidence="2">50S ribosomal protein L4</fullName>
    </alternativeName>
</protein>
<proteinExistence type="inferred from homology"/>
<gene>
    <name evidence="1" type="primary">rplD</name>
    <name type="ordered locus">Dvul_1764</name>
</gene>
<keyword id="KW-0687">Ribonucleoprotein</keyword>
<keyword id="KW-0689">Ribosomal protein</keyword>
<keyword id="KW-0694">RNA-binding</keyword>
<keyword id="KW-0699">rRNA-binding</keyword>
<accession>A1VEB5</accession>
<sequence>MAVVKVYDQNKQEAGEITLAPEVFEVEVRPEILHLVVRAQRAAFRAGTHATKTRAFVSGGGLKPWRQKGTGRARAGSIRSPLWRGGAIIFGPQPRDYEFKVNKKVRKLALRMALSSRLAGSNLLVVKGFELPEVKTKLFAKIADTLGLDKALIIAPEENTTLALSVRNIPGITIATPEQLSVYEILKHKQLVLVEGAVASVQDRLK</sequence>
<feature type="chain" id="PRO_1000052393" description="Large ribosomal subunit protein uL4">
    <location>
        <begin position="1"/>
        <end position="206"/>
    </location>
</feature>
<organism>
    <name type="scientific">Nitratidesulfovibrio vulgaris (strain DP4)</name>
    <name type="common">Desulfovibrio vulgaris</name>
    <dbReference type="NCBI Taxonomy" id="391774"/>
    <lineage>
        <taxon>Bacteria</taxon>
        <taxon>Pseudomonadati</taxon>
        <taxon>Thermodesulfobacteriota</taxon>
        <taxon>Desulfovibrionia</taxon>
        <taxon>Desulfovibrionales</taxon>
        <taxon>Desulfovibrionaceae</taxon>
        <taxon>Nitratidesulfovibrio</taxon>
    </lineage>
</organism>
<comment type="function">
    <text evidence="1">One of the primary rRNA binding proteins, this protein initially binds near the 5'-end of the 23S rRNA. It is important during the early stages of 50S assembly. It makes multiple contacts with different domains of the 23S rRNA in the assembled 50S subunit and ribosome.</text>
</comment>
<comment type="function">
    <text evidence="1">Forms part of the polypeptide exit tunnel.</text>
</comment>
<comment type="subunit">
    <text evidence="1">Part of the 50S ribosomal subunit.</text>
</comment>
<comment type="similarity">
    <text evidence="1">Belongs to the universal ribosomal protein uL4 family.</text>
</comment>